<comment type="function">
    <text evidence="1">Specifically methylates the N7 position of guanine in position 535 of 16S rRNA.</text>
</comment>
<comment type="subcellular location">
    <subcellularLocation>
        <location evidence="1">Cytoplasm</location>
    </subcellularLocation>
</comment>
<comment type="similarity">
    <text evidence="1">Belongs to the methyltransferase superfamily. RNA methyltransferase RsmG family.</text>
</comment>
<accession>B9E8Z2</accession>
<dbReference type="EC" id="2.1.1.-" evidence="1"/>
<dbReference type="EMBL" id="AP009484">
    <property type="protein sequence ID" value="BAH18660.1"/>
    <property type="molecule type" value="Genomic_DNA"/>
</dbReference>
<dbReference type="RefSeq" id="WP_015912452.1">
    <property type="nucleotide sequence ID" value="NC_011999.1"/>
</dbReference>
<dbReference type="SMR" id="B9E8Z2"/>
<dbReference type="STRING" id="458233.MCCL_1953"/>
<dbReference type="KEGG" id="mcl:MCCL_1953"/>
<dbReference type="eggNOG" id="COG0357">
    <property type="taxonomic scope" value="Bacteria"/>
</dbReference>
<dbReference type="HOGENOM" id="CLU_065341_0_2_9"/>
<dbReference type="OrthoDB" id="9808773at2"/>
<dbReference type="Proteomes" id="UP000001383">
    <property type="component" value="Chromosome"/>
</dbReference>
<dbReference type="GO" id="GO:0005829">
    <property type="term" value="C:cytosol"/>
    <property type="evidence" value="ECO:0007669"/>
    <property type="project" value="TreeGrafter"/>
</dbReference>
<dbReference type="GO" id="GO:0070043">
    <property type="term" value="F:rRNA (guanine-N7-)-methyltransferase activity"/>
    <property type="evidence" value="ECO:0007669"/>
    <property type="project" value="UniProtKB-UniRule"/>
</dbReference>
<dbReference type="CDD" id="cd02440">
    <property type="entry name" value="AdoMet_MTases"/>
    <property type="match status" value="1"/>
</dbReference>
<dbReference type="FunFam" id="3.40.50.150:FF:000041">
    <property type="entry name" value="Ribosomal RNA small subunit methyltransferase G"/>
    <property type="match status" value="1"/>
</dbReference>
<dbReference type="Gene3D" id="3.40.50.150">
    <property type="entry name" value="Vaccinia Virus protein VP39"/>
    <property type="match status" value="1"/>
</dbReference>
<dbReference type="HAMAP" id="MF_00074">
    <property type="entry name" value="16SrRNA_methyltr_G"/>
    <property type="match status" value="1"/>
</dbReference>
<dbReference type="InterPro" id="IPR003682">
    <property type="entry name" value="rRNA_ssu_MeTfrase_G"/>
</dbReference>
<dbReference type="InterPro" id="IPR029063">
    <property type="entry name" value="SAM-dependent_MTases_sf"/>
</dbReference>
<dbReference type="NCBIfam" id="TIGR00138">
    <property type="entry name" value="rsmG_gidB"/>
    <property type="match status" value="1"/>
</dbReference>
<dbReference type="PANTHER" id="PTHR31760">
    <property type="entry name" value="S-ADENOSYL-L-METHIONINE-DEPENDENT METHYLTRANSFERASES SUPERFAMILY PROTEIN"/>
    <property type="match status" value="1"/>
</dbReference>
<dbReference type="PANTHER" id="PTHR31760:SF0">
    <property type="entry name" value="S-ADENOSYL-L-METHIONINE-DEPENDENT METHYLTRANSFERASES SUPERFAMILY PROTEIN"/>
    <property type="match status" value="1"/>
</dbReference>
<dbReference type="Pfam" id="PF02527">
    <property type="entry name" value="GidB"/>
    <property type="match status" value="1"/>
</dbReference>
<dbReference type="PIRSF" id="PIRSF003078">
    <property type="entry name" value="GidB"/>
    <property type="match status" value="1"/>
</dbReference>
<dbReference type="SUPFAM" id="SSF53335">
    <property type="entry name" value="S-adenosyl-L-methionine-dependent methyltransferases"/>
    <property type="match status" value="1"/>
</dbReference>
<evidence type="ECO:0000255" key="1">
    <source>
        <dbReference type="HAMAP-Rule" id="MF_00074"/>
    </source>
</evidence>
<evidence type="ECO:0000256" key="2">
    <source>
        <dbReference type="SAM" id="MobiDB-lite"/>
    </source>
</evidence>
<keyword id="KW-0963">Cytoplasm</keyword>
<keyword id="KW-0489">Methyltransferase</keyword>
<keyword id="KW-1185">Reference proteome</keyword>
<keyword id="KW-0698">rRNA processing</keyword>
<keyword id="KW-0949">S-adenosyl-L-methionine</keyword>
<keyword id="KW-0808">Transferase</keyword>
<proteinExistence type="inferred from homology"/>
<protein>
    <recommendedName>
        <fullName evidence="1">Ribosomal RNA small subunit methyltransferase G</fullName>
        <ecNumber evidence="1">2.1.1.-</ecNumber>
    </recommendedName>
    <alternativeName>
        <fullName evidence="1">16S rRNA 7-methylguanosine methyltransferase</fullName>
        <shortName evidence="1">16S rRNA m7G methyltransferase</shortName>
    </alternativeName>
</protein>
<name>RSMG_MACCJ</name>
<feature type="chain" id="PRO_1000118192" description="Ribosomal RNA small subunit methyltransferase G">
    <location>
        <begin position="1"/>
        <end position="238"/>
    </location>
</feature>
<feature type="region of interest" description="Disordered" evidence="2">
    <location>
        <begin position="216"/>
        <end position="238"/>
    </location>
</feature>
<feature type="binding site" evidence="1">
    <location>
        <position position="77"/>
    </location>
    <ligand>
        <name>S-adenosyl-L-methionine</name>
        <dbReference type="ChEBI" id="CHEBI:59789"/>
    </ligand>
</feature>
<feature type="binding site" evidence="1">
    <location>
        <position position="82"/>
    </location>
    <ligand>
        <name>S-adenosyl-L-methionine</name>
        <dbReference type="ChEBI" id="CHEBI:59789"/>
    </ligand>
</feature>
<feature type="binding site" evidence="1">
    <location>
        <begin position="128"/>
        <end position="129"/>
    </location>
    <ligand>
        <name>S-adenosyl-L-methionine</name>
        <dbReference type="ChEBI" id="CHEBI:59789"/>
    </ligand>
</feature>
<feature type="binding site" evidence="1">
    <location>
        <position position="146"/>
    </location>
    <ligand>
        <name>S-adenosyl-L-methionine</name>
        <dbReference type="ChEBI" id="CHEBI:59789"/>
    </ligand>
</feature>
<reference key="1">
    <citation type="journal article" date="2009" name="J. Bacteriol.">
        <title>Complete genome sequence of Macrococcus caseolyticus strain JCSCS5402, reflecting the ancestral genome of the human-pathogenic staphylococci.</title>
        <authorList>
            <person name="Baba T."/>
            <person name="Kuwahara-Arai K."/>
            <person name="Uchiyama I."/>
            <person name="Takeuchi F."/>
            <person name="Ito T."/>
            <person name="Hiramatsu K."/>
        </authorList>
    </citation>
    <scope>NUCLEOTIDE SEQUENCE [LARGE SCALE GENOMIC DNA]</scope>
    <source>
        <strain>JCSC5402</strain>
    </source>
</reference>
<organism>
    <name type="scientific">Macrococcus caseolyticus (strain JCSC5402)</name>
    <name type="common">Macrococcoides caseolyticum</name>
    <dbReference type="NCBI Taxonomy" id="458233"/>
    <lineage>
        <taxon>Bacteria</taxon>
        <taxon>Bacillati</taxon>
        <taxon>Bacillota</taxon>
        <taxon>Bacilli</taxon>
        <taxon>Bacillales</taxon>
        <taxon>Staphylococcaceae</taxon>
        <taxon>Macrococcoides</taxon>
    </lineage>
</organism>
<gene>
    <name evidence="1" type="primary">rsmG</name>
    <name type="ordered locus">MCCL_1953</name>
</gene>
<sequence length="238" mass="27187">MNEMKFLQHLKEKGFELTDEQQKQFAIYYETLVEWNEKINLTAVTEKEEVYLKHFFDSITPSFYFDFNKVKSICDVGAGAGFPSIPLKILYPHLEITIVDSLNKRINFLNHLSAELNLTNCHFVHDRAETFGKGEYRESFDVVTARAVARLSVLSELCLPLVKKGGHFIALKGAQGEIEVEEGLFAISILGGAVVENHPLTLPEEESMRYILDIEKKRQTPKKYPRKPGTPNKEPLLK</sequence>